<evidence type="ECO:0000250" key="1"/>
<evidence type="ECO:0000305" key="2"/>
<organism>
    <name type="scientific">Staphylococcus aureus (strain Mu50 / ATCC 700699)</name>
    <dbReference type="NCBI Taxonomy" id="158878"/>
    <lineage>
        <taxon>Bacteria</taxon>
        <taxon>Bacillati</taxon>
        <taxon>Bacillota</taxon>
        <taxon>Bacilli</taxon>
        <taxon>Bacillales</taxon>
        <taxon>Staphylococcaceae</taxon>
        <taxon>Staphylococcus</taxon>
    </lineage>
</organism>
<gene>
    <name type="primary">hisI</name>
    <name type="synonym">hisIE</name>
    <name type="ordered locus">SAV2672</name>
</gene>
<reference key="1">
    <citation type="journal article" date="2001" name="Lancet">
        <title>Whole genome sequencing of meticillin-resistant Staphylococcus aureus.</title>
        <authorList>
            <person name="Kuroda M."/>
            <person name="Ohta T."/>
            <person name="Uchiyama I."/>
            <person name="Baba T."/>
            <person name="Yuzawa H."/>
            <person name="Kobayashi I."/>
            <person name="Cui L."/>
            <person name="Oguchi A."/>
            <person name="Aoki K."/>
            <person name="Nagai Y."/>
            <person name="Lian J.-Q."/>
            <person name="Ito T."/>
            <person name="Kanamori M."/>
            <person name="Matsumaru H."/>
            <person name="Maruyama A."/>
            <person name="Murakami H."/>
            <person name="Hosoyama A."/>
            <person name="Mizutani-Ui Y."/>
            <person name="Takahashi N.K."/>
            <person name="Sawano T."/>
            <person name="Inoue R."/>
            <person name="Kaito C."/>
            <person name="Sekimizu K."/>
            <person name="Hirakawa H."/>
            <person name="Kuhara S."/>
            <person name="Goto S."/>
            <person name="Yabuzaki J."/>
            <person name="Kanehisa M."/>
            <person name="Yamashita A."/>
            <person name="Oshima K."/>
            <person name="Furuya K."/>
            <person name="Yoshino C."/>
            <person name="Shiba T."/>
            <person name="Hattori M."/>
            <person name="Ogasawara N."/>
            <person name="Hayashi H."/>
            <person name="Hiramatsu K."/>
        </authorList>
    </citation>
    <scope>NUCLEOTIDE SEQUENCE [LARGE SCALE GENOMIC DNA]</scope>
    <source>
        <strain>Mu50 / ATCC 700699</strain>
    </source>
</reference>
<name>HIS2_STAAM</name>
<proteinExistence type="inferred from homology"/>
<feature type="chain" id="PRO_0000136431" description="Histidine biosynthesis bifunctional protein HisIE">
    <location>
        <begin position="1"/>
        <end position="210"/>
    </location>
</feature>
<feature type="region of interest" description="Phosphoribosyl-AMP cyclohydrolase">
    <location>
        <begin position="1"/>
        <end position="106"/>
    </location>
</feature>
<feature type="region of interest" description="Phosphoribosyl-ATP pyrophosphohydrolase">
    <location>
        <begin position="107"/>
        <end position="210"/>
    </location>
</feature>
<accession>P64355</accession>
<accession>Q99QW9</accession>
<keyword id="KW-0028">Amino-acid biosynthesis</keyword>
<keyword id="KW-0067">ATP-binding</keyword>
<keyword id="KW-0963">Cytoplasm</keyword>
<keyword id="KW-0368">Histidine biosynthesis</keyword>
<keyword id="KW-0378">Hydrolase</keyword>
<keyword id="KW-0511">Multifunctional enzyme</keyword>
<keyword id="KW-0547">Nucleotide-binding</keyword>
<protein>
    <recommendedName>
        <fullName>Histidine biosynthesis bifunctional protein HisIE</fullName>
    </recommendedName>
    <domain>
        <recommendedName>
            <fullName>Phosphoribosyl-AMP cyclohydrolase</fullName>
            <shortName>PRA-CH</shortName>
            <ecNumber>3.5.4.19</ecNumber>
        </recommendedName>
    </domain>
    <domain>
        <recommendedName>
            <fullName>Phosphoribosyl-ATP pyrophosphatase</fullName>
            <shortName>PRA-PH</shortName>
            <ecNumber>3.6.1.31</ecNumber>
        </recommendedName>
    </domain>
</protein>
<dbReference type="EC" id="3.5.4.19"/>
<dbReference type="EC" id="3.6.1.31"/>
<dbReference type="EMBL" id="BA000017">
    <property type="protein sequence ID" value="BAB58834.1"/>
    <property type="molecule type" value="Genomic_DNA"/>
</dbReference>
<dbReference type="SMR" id="P64355"/>
<dbReference type="KEGG" id="sav:SAV2672"/>
<dbReference type="HOGENOM" id="CLU_048577_3_1_9"/>
<dbReference type="PhylomeDB" id="P64355"/>
<dbReference type="UniPathway" id="UPA00031">
    <property type="reaction ID" value="UER00007"/>
</dbReference>
<dbReference type="UniPathway" id="UPA00031">
    <property type="reaction ID" value="UER00008"/>
</dbReference>
<dbReference type="Proteomes" id="UP000002481">
    <property type="component" value="Chromosome"/>
</dbReference>
<dbReference type="GO" id="GO:0005737">
    <property type="term" value="C:cytoplasm"/>
    <property type="evidence" value="ECO:0007669"/>
    <property type="project" value="UniProtKB-SubCell"/>
</dbReference>
<dbReference type="GO" id="GO:0005524">
    <property type="term" value="F:ATP binding"/>
    <property type="evidence" value="ECO:0007669"/>
    <property type="project" value="UniProtKB-KW"/>
</dbReference>
<dbReference type="GO" id="GO:0004635">
    <property type="term" value="F:phosphoribosyl-AMP cyclohydrolase activity"/>
    <property type="evidence" value="ECO:0007669"/>
    <property type="project" value="UniProtKB-UniRule"/>
</dbReference>
<dbReference type="GO" id="GO:0004636">
    <property type="term" value="F:phosphoribosyl-ATP diphosphatase activity"/>
    <property type="evidence" value="ECO:0007669"/>
    <property type="project" value="UniProtKB-UniRule"/>
</dbReference>
<dbReference type="GO" id="GO:0000105">
    <property type="term" value="P:L-histidine biosynthetic process"/>
    <property type="evidence" value="ECO:0007669"/>
    <property type="project" value="UniProtKB-UniRule"/>
</dbReference>
<dbReference type="CDD" id="cd11534">
    <property type="entry name" value="NTP-PPase_HisIE_like"/>
    <property type="match status" value="1"/>
</dbReference>
<dbReference type="FunFam" id="3.10.20.810:FF:000001">
    <property type="entry name" value="Histidine biosynthesis bifunctional protein HisIE"/>
    <property type="match status" value="1"/>
</dbReference>
<dbReference type="Gene3D" id="1.10.287.1080">
    <property type="entry name" value="MazG-like"/>
    <property type="match status" value="1"/>
</dbReference>
<dbReference type="Gene3D" id="3.10.20.810">
    <property type="entry name" value="Phosphoribosyl-AMP cyclohydrolase"/>
    <property type="match status" value="1"/>
</dbReference>
<dbReference type="HAMAP" id="MF_01020">
    <property type="entry name" value="HisE"/>
    <property type="match status" value="1"/>
</dbReference>
<dbReference type="HAMAP" id="MF_01021">
    <property type="entry name" value="HisI"/>
    <property type="match status" value="1"/>
</dbReference>
<dbReference type="HAMAP" id="MF_01019">
    <property type="entry name" value="HisIE"/>
    <property type="match status" value="1"/>
</dbReference>
<dbReference type="InterPro" id="IPR023019">
    <property type="entry name" value="His_synth_HisIE"/>
</dbReference>
<dbReference type="InterPro" id="IPR008179">
    <property type="entry name" value="HisE"/>
</dbReference>
<dbReference type="InterPro" id="IPR026660">
    <property type="entry name" value="PRA-CH"/>
</dbReference>
<dbReference type="InterPro" id="IPR021130">
    <property type="entry name" value="PRib-ATP_PPHydrolase-like"/>
</dbReference>
<dbReference type="InterPro" id="IPR002496">
    <property type="entry name" value="PRib_AMP_CycHydrolase_dom"/>
</dbReference>
<dbReference type="InterPro" id="IPR038019">
    <property type="entry name" value="PRib_AMP_CycHydrolase_sf"/>
</dbReference>
<dbReference type="NCBIfam" id="TIGR03188">
    <property type="entry name" value="histidine_hisI"/>
    <property type="match status" value="1"/>
</dbReference>
<dbReference type="NCBIfam" id="NF000768">
    <property type="entry name" value="PRK00051.1"/>
    <property type="match status" value="1"/>
</dbReference>
<dbReference type="NCBIfam" id="NF002747">
    <property type="entry name" value="PRK02759.1"/>
    <property type="match status" value="1"/>
</dbReference>
<dbReference type="PANTHER" id="PTHR42945">
    <property type="entry name" value="HISTIDINE BIOSYNTHESIS BIFUNCTIONAL PROTEIN"/>
    <property type="match status" value="1"/>
</dbReference>
<dbReference type="PANTHER" id="PTHR42945:SF1">
    <property type="entry name" value="HISTIDINE BIOSYNTHESIS BIFUNCTIONAL PROTEIN HIS7"/>
    <property type="match status" value="1"/>
</dbReference>
<dbReference type="Pfam" id="PF01502">
    <property type="entry name" value="PRA-CH"/>
    <property type="match status" value="1"/>
</dbReference>
<dbReference type="Pfam" id="PF01503">
    <property type="entry name" value="PRA-PH"/>
    <property type="match status" value="1"/>
</dbReference>
<dbReference type="SUPFAM" id="SSF101386">
    <property type="entry name" value="all-alpha NTP pyrophosphatases"/>
    <property type="match status" value="1"/>
</dbReference>
<dbReference type="SUPFAM" id="SSF141734">
    <property type="entry name" value="HisI-like"/>
    <property type="match status" value="1"/>
</dbReference>
<sequence length="210" mass="23944">MTKYKIDFSKGLVPAILQDNQTKQVLMLGYMNQEAFDKTIEDGVVCFYSRSKQRLWTKGETSGHTQLVKDIHVDCDNDTILIDVIPNGPTCHTGSQSCFNTEVPFSVQTLAQTVQDSAQSNNEKSYTKYLLTEGIEKITKKYGEEAFEVVIEAIKGDKKAFVSEVADELYHLFVLMHALGVDFSEIEAELARRHHKRNNFKGERQNIEQW</sequence>
<comment type="catalytic activity">
    <reaction>
        <text>1-(5-phospho-beta-D-ribosyl)-ATP + H2O = 1-(5-phospho-beta-D-ribosyl)-5'-AMP + diphosphate + H(+)</text>
        <dbReference type="Rhea" id="RHEA:22828"/>
        <dbReference type="ChEBI" id="CHEBI:15377"/>
        <dbReference type="ChEBI" id="CHEBI:15378"/>
        <dbReference type="ChEBI" id="CHEBI:33019"/>
        <dbReference type="ChEBI" id="CHEBI:59457"/>
        <dbReference type="ChEBI" id="CHEBI:73183"/>
        <dbReference type="EC" id="3.6.1.31"/>
    </reaction>
</comment>
<comment type="catalytic activity">
    <reaction>
        <text>1-(5-phospho-beta-D-ribosyl)-5'-AMP + H2O = 1-(5-phospho-beta-D-ribosyl)-5-[(5-phospho-beta-D-ribosylamino)methylideneamino]imidazole-4-carboxamide</text>
        <dbReference type="Rhea" id="RHEA:20049"/>
        <dbReference type="ChEBI" id="CHEBI:15377"/>
        <dbReference type="ChEBI" id="CHEBI:58435"/>
        <dbReference type="ChEBI" id="CHEBI:59457"/>
        <dbReference type="EC" id="3.5.4.19"/>
    </reaction>
</comment>
<comment type="pathway">
    <text>Amino-acid biosynthesis; L-histidine biosynthesis; L-histidine from 5-phospho-alpha-D-ribose 1-diphosphate: step 2/9.</text>
</comment>
<comment type="pathway">
    <text>Amino-acid biosynthesis; L-histidine biosynthesis; L-histidine from 5-phospho-alpha-D-ribose 1-diphosphate: step 3/9.</text>
</comment>
<comment type="subcellular location">
    <subcellularLocation>
        <location evidence="1">Cytoplasm</location>
    </subcellularLocation>
</comment>
<comment type="similarity">
    <text evidence="2">In the N-terminal section; belongs to the PRA-CH family.</text>
</comment>
<comment type="similarity">
    <text evidence="2">In the C-terminal section; belongs to the PRA-PH family.</text>
</comment>